<feature type="chain" id="PRO_0000161887" description="23S rRNA (uracil(1939)-C(5))-methyltransferase RlmD">
    <location>
        <begin position="1"/>
        <end position="466"/>
    </location>
</feature>
<feature type="domain" description="TRAM" evidence="1">
    <location>
        <begin position="1"/>
        <end position="54"/>
    </location>
</feature>
<feature type="active site" description="Nucleophile" evidence="1">
    <location>
        <position position="393"/>
    </location>
</feature>
<feature type="binding site" evidence="1">
    <location>
        <position position="67"/>
    </location>
    <ligand>
        <name>[4Fe-4S] cluster</name>
        <dbReference type="ChEBI" id="CHEBI:49883"/>
    </ligand>
</feature>
<feature type="binding site" evidence="1">
    <location>
        <position position="73"/>
    </location>
    <ligand>
        <name>[4Fe-4S] cluster</name>
        <dbReference type="ChEBI" id="CHEBI:49883"/>
    </ligand>
</feature>
<feature type="binding site" evidence="1">
    <location>
        <position position="76"/>
    </location>
    <ligand>
        <name>[4Fe-4S] cluster</name>
        <dbReference type="ChEBI" id="CHEBI:49883"/>
    </ligand>
</feature>
<feature type="binding site" evidence="1">
    <location>
        <position position="155"/>
    </location>
    <ligand>
        <name>[4Fe-4S] cluster</name>
        <dbReference type="ChEBI" id="CHEBI:49883"/>
    </ligand>
</feature>
<feature type="binding site" evidence="1">
    <location>
        <position position="264"/>
    </location>
    <ligand>
        <name>S-adenosyl-L-methionine</name>
        <dbReference type="ChEBI" id="CHEBI:59789"/>
    </ligand>
</feature>
<feature type="binding site" evidence="1">
    <location>
        <position position="293"/>
    </location>
    <ligand>
        <name>S-adenosyl-L-methionine</name>
        <dbReference type="ChEBI" id="CHEBI:59789"/>
    </ligand>
</feature>
<feature type="binding site" evidence="1">
    <location>
        <position position="298"/>
    </location>
    <ligand>
        <name>S-adenosyl-L-methionine</name>
        <dbReference type="ChEBI" id="CHEBI:59789"/>
    </ligand>
</feature>
<feature type="binding site" evidence="1">
    <location>
        <position position="314"/>
    </location>
    <ligand>
        <name>S-adenosyl-L-methionine</name>
        <dbReference type="ChEBI" id="CHEBI:59789"/>
    </ligand>
</feature>
<feature type="binding site" evidence="1">
    <location>
        <position position="342"/>
    </location>
    <ligand>
        <name>S-adenosyl-L-methionine</name>
        <dbReference type="ChEBI" id="CHEBI:59789"/>
    </ligand>
</feature>
<feature type="binding site" evidence="1">
    <location>
        <position position="363"/>
    </location>
    <ligand>
        <name>S-adenosyl-L-methionine</name>
        <dbReference type="ChEBI" id="CHEBI:59789"/>
    </ligand>
</feature>
<organism>
    <name type="scientific">Bordetella bronchiseptica (strain ATCC BAA-588 / NCTC 13252 / RB50)</name>
    <name type="common">Alcaligenes bronchisepticus</name>
    <dbReference type="NCBI Taxonomy" id="257310"/>
    <lineage>
        <taxon>Bacteria</taxon>
        <taxon>Pseudomonadati</taxon>
        <taxon>Pseudomonadota</taxon>
        <taxon>Betaproteobacteria</taxon>
        <taxon>Burkholderiales</taxon>
        <taxon>Alcaligenaceae</taxon>
        <taxon>Bordetella</taxon>
    </lineage>
</organism>
<keyword id="KW-0004">4Fe-4S</keyword>
<keyword id="KW-0408">Iron</keyword>
<keyword id="KW-0411">Iron-sulfur</keyword>
<keyword id="KW-0479">Metal-binding</keyword>
<keyword id="KW-0489">Methyltransferase</keyword>
<keyword id="KW-0698">rRNA processing</keyword>
<keyword id="KW-0949">S-adenosyl-L-methionine</keyword>
<keyword id="KW-0808">Transferase</keyword>
<sequence>MVDVLNIESLDLEARGIAHRDGKVLFVEGALPGERVTVQTVRRKPSYEIAKVEEILRPSSQRVAPRCPHFGVCGGCAMQHLAPAAQVAIKQRALEDTFWHVGKLKPARILPPLYGPTWGYRYRARLSVRVVPKKGGVLVGFHERKSSYVADMRECHVLPPAVSRLLLPLRAMIAAMSAPDRMPQIEVALGDEAIVLVLRHLLPLTDGDIAVLRAFAAEHGVQWWLQSKGPDTVHPLEREHADALAYTLPEFGLRMPYRPTDFTQVNHAINRAMVSRALKLLDVQPQDRVADLFCGLGNFTLPLATQGREAVGVEGSKALTDRAHEAAARHGLGERTRFATLNLFEVDVQWLRGLGYFDRMLIDPPREGAQAVAQALSLLAPGERPRRIVYVSCNPGTLARDAAIMVHEGGYALRSAGVINMFPHTGHVESIAVFESLDEATVLQAQAQARQKAREEAERLAEAAAA</sequence>
<accession>Q7WI42</accession>
<gene>
    <name evidence="1" type="primary">rlmD</name>
    <name type="synonym">rumA</name>
    <name type="ordered locus">BB3014</name>
</gene>
<name>RLMD_BORBR</name>
<proteinExistence type="inferred from homology"/>
<reference key="1">
    <citation type="journal article" date="2003" name="Nat. Genet.">
        <title>Comparative analysis of the genome sequences of Bordetella pertussis, Bordetella parapertussis and Bordetella bronchiseptica.</title>
        <authorList>
            <person name="Parkhill J."/>
            <person name="Sebaihia M."/>
            <person name="Preston A."/>
            <person name="Murphy L.D."/>
            <person name="Thomson N.R."/>
            <person name="Harris D.E."/>
            <person name="Holden M.T.G."/>
            <person name="Churcher C.M."/>
            <person name="Bentley S.D."/>
            <person name="Mungall K.L."/>
            <person name="Cerdeno-Tarraga A.-M."/>
            <person name="Temple L."/>
            <person name="James K.D."/>
            <person name="Harris B."/>
            <person name="Quail M.A."/>
            <person name="Achtman M."/>
            <person name="Atkin R."/>
            <person name="Baker S."/>
            <person name="Basham D."/>
            <person name="Bason N."/>
            <person name="Cherevach I."/>
            <person name="Chillingworth T."/>
            <person name="Collins M."/>
            <person name="Cronin A."/>
            <person name="Davis P."/>
            <person name="Doggett J."/>
            <person name="Feltwell T."/>
            <person name="Goble A."/>
            <person name="Hamlin N."/>
            <person name="Hauser H."/>
            <person name="Holroyd S."/>
            <person name="Jagels K."/>
            <person name="Leather S."/>
            <person name="Moule S."/>
            <person name="Norberczak H."/>
            <person name="O'Neil S."/>
            <person name="Ormond D."/>
            <person name="Price C."/>
            <person name="Rabbinowitsch E."/>
            <person name="Rutter S."/>
            <person name="Sanders M."/>
            <person name="Saunders D."/>
            <person name="Seeger K."/>
            <person name="Sharp S."/>
            <person name="Simmonds M."/>
            <person name="Skelton J."/>
            <person name="Squares R."/>
            <person name="Squares S."/>
            <person name="Stevens K."/>
            <person name="Unwin L."/>
            <person name="Whitehead S."/>
            <person name="Barrell B.G."/>
            <person name="Maskell D.J."/>
        </authorList>
    </citation>
    <scope>NUCLEOTIDE SEQUENCE [LARGE SCALE GENOMIC DNA]</scope>
    <source>
        <strain>ATCC BAA-588 / NCTC 13252 / RB50</strain>
    </source>
</reference>
<evidence type="ECO:0000255" key="1">
    <source>
        <dbReference type="HAMAP-Rule" id="MF_01010"/>
    </source>
</evidence>
<dbReference type="EC" id="2.1.1.190" evidence="1"/>
<dbReference type="EMBL" id="BX640446">
    <property type="protein sequence ID" value="CAE33506.1"/>
    <property type="molecule type" value="Genomic_DNA"/>
</dbReference>
<dbReference type="RefSeq" id="WP_010926715.1">
    <property type="nucleotide sequence ID" value="NC_002927.3"/>
</dbReference>
<dbReference type="SMR" id="Q7WI42"/>
<dbReference type="GeneID" id="56479122"/>
<dbReference type="KEGG" id="bbr:BB3014"/>
<dbReference type="eggNOG" id="COG2265">
    <property type="taxonomic scope" value="Bacteria"/>
</dbReference>
<dbReference type="HOGENOM" id="CLU_014689_8_2_4"/>
<dbReference type="Proteomes" id="UP000001027">
    <property type="component" value="Chromosome"/>
</dbReference>
<dbReference type="GO" id="GO:0051539">
    <property type="term" value="F:4 iron, 4 sulfur cluster binding"/>
    <property type="evidence" value="ECO:0007669"/>
    <property type="project" value="UniProtKB-KW"/>
</dbReference>
<dbReference type="GO" id="GO:0005506">
    <property type="term" value="F:iron ion binding"/>
    <property type="evidence" value="ECO:0007669"/>
    <property type="project" value="UniProtKB-UniRule"/>
</dbReference>
<dbReference type="GO" id="GO:0003723">
    <property type="term" value="F:RNA binding"/>
    <property type="evidence" value="ECO:0007669"/>
    <property type="project" value="InterPro"/>
</dbReference>
<dbReference type="GO" id="GO:0070041">
    <property type="term" value="F:rRNA (uridine-C5-)-methyltransferase activity"/>
    <property type="evidence" value="ECO:0007669"/>
    <property type="project" value="UniProtKB-UniRule"/>
</dbReference>
<dbReference type="GO" id="GO:0070475">
    <property type="term" value="P:rRNA base methylation"/>
    <property type="evidence" value="ECO:0007669"/>
    <property type="project" value="TreeGrafter"/>
</dbReference>
<dbReference type="CDD" id="cd02440">
    <property type="entry name" value="AdoMet_MTases"/>
    <property type="match status" value="1"/>
</dbReference>
<dbReference type="FunFam" id="2.40.50.140:FF:000097">
    <property type="entry name" value="23S rRNA (uracil(1939)-C(5))-methyltransferase RlmD"/>
    <property type="match status" value="1"/>
</dbReference>
<dbReference type="Gene3D" id="2.40.50.1070">
    <property type="match status" value="1"/>
</dbReference>
<dbReference type="Gene3D" id="2.40.50.140">
    <property type="entry name" value="Nucleic acid-binding proteins"/>
    <property type="match status" value="1"/>
</dbReference>
<dbReference type="Gene3D" id="3.40.50.150">
    <property type="entry name" value="Vaccinia Virus protein VP39"/>
    <property type="match status" value="1"/>
</dbReference>
<dbReference type="HAMAP" id="MF_01010">
    <property type="entry name" value="23SrRNA_methyltr_RlmD"/>
    <property type="match status" value="1"/>
</dbReference>
<dbReference type="InterPro" id="IPR001566">
    <property type="entry name" value="23S_rRNA_MeTrfase_RlmD"/>
</dbReference>
<dbReference type="InterPro" id="IPR030390">
    <property type="entry name" value="MeTrfase_TrmA_AS"/>
</dbReference>
<dbReference type="InterPro" id="IPR030391">
    <property type="entry name" value="MeTrfase_TrmA_CS"/>
</dbReference>
<dbReference type="InterPro" id="IPR012340">
    <property type="entry name" value="NA-bd_OB-fold"/>
</dbReference>
<dbReference type="InterPro" id="IPR029063">
    <property type="entry name" value="SAM-dependent_MTases_sf"/>
</dbReference>
<dbReference type="InterPro" id="IPR002792">
    <property type="entry name" value="TRAM_dom"/>
</dbReference>
<dbReference type="InterPro" id="IPR010280">
    <property type="entry name" value="U5_MeTrfase_fam"/>
</dbReference>
<dbReference type="NCBIfam" id="NF009639">
    <property type="entry name" value="PRK13168.1"/>
    <property type="match status" value="1"/>
</dbReference>
<dbReference type="NCBIfam" id="TIGR00479">
    <property type="entry name" value="rumA"/>
    <property type="match status" value="1"/>
</dbReference>
<dbReference type="PANTHER" id="PTHR11061:SF49">
    <property type="entry name" value="23S RRNA (URACIL(1939)-C(5))-METHYLTRANSFERASE RLMD"/>
    <property type="match status" value="1"/>
</dbReference>
<dbReference type="PANTHER" id="PTHR11061">
    <property type="entry name" value="RNA M5U METHYLTRANSFERASE"/>
    <property type="match status" value="1"/>
</dbReference>
<dbReference type="Pfam" id="PF01938">
    <property type="entry name" value="TRAM"/>
    <property type="match status" value="1"/>
</dbReference>
<dbReference type="Pfam" id="PF05958">
    <property type="entry name" value="tRNA_U5-meth_tr"/>
    <property type="match status" value="1"/>
</dbReference>
<dbReference type="SUPFAM" id="SSF50249">
    <property type="entry name" value="Nucleic acid-binding proteins"/>
    <property type="match status" value="1"/>
</dbReference>
<dbReference type="SUPFAM" id="SSF53335">
    <property type="entry name" value="S-adenosyl-L-methionine-dependent methyltransferases"/>
    <property type="match status" value="1"/>
</dbReference>
<dbReference type="PROSITE" id="PS51687">
    <property type="entry name" value="SAM_MT_RNA_M5U"/>
    <property type="match status" value="1"/>
</dbReference>
<dbReference type="PROSITE" id="PS50926">
    <property type="entry name" value="TRAM"/>
    <property type="match status" value="1"/>
</dbReference>
<dbReference type="PROSITE" id="PS01230">
    <property type="entry name" value="TRMA_1"/>
    <property type="match status" value="1"/>
</dbReference>
<dbReference type="PROSITE" id="PS01231">
    <property type="entry name" value="TRMA_2"/>
    <property type="match status" value="1"/>
</dbReference>
<comment type="function">
    <text evidence="1">Catalyzes the formation of 5-methyl-uridine at position 1939 (m5U1939) in 23S rRNA.</text>
</comment>
<comment type="catalytic activity">
    <reaction evidence="1">
        <text>uridine(1939) in 23S rRNA + S-adenosyl-L-methionine = 5-methyluridine(1939) in 23S rRNA + S-adenosyl-L-homocysteine + H(+)</text>
        <dbReference type="Rhea" id="RHEA:42908"/>
        <dbReference type="Rhea" id="RHEA-COMP:10278"/>
        <dbReference type="Rhea" id="RHEA-COMP:10279"/>
        <dbReference type="ChEBI" id="CHEBI:15378"/>
        <dbReference type="ChEBI" id="CHEBI:57856"/>
        <dbReference type="ChEBI" id="CHEBI:59789"/>
        <dbReference type="ChEBI" id="CHEBI:65315"/>
        <dbReference type="ChEBI" id="CHEBI:74447"/>
        <dbReference type="EC" id="2.1.1.190"/>
    </reaction>
</comment>
<comment type="similarity">
    <text evidence="1">Belongs to the class I-like SAM-binding methyltransferase superfamily. RNA M5U methyltransferase family. RlmD subfamily.</text>
</comment>
<protein>
    <recommendedName>
        <fullName evidence="1">23S rRNA (uracil(1939)-C(5))-methyltransferase RlmD</fullName>
        <ecNumber evidence="1">2.1.1.190</ecNumber>
    </recommendedName>
    <alternativeName>
        <fullName evidence="1">23S rRNA(m5U1939)-methyltransferase</fullName>
    </alternativeName>
</protein>